<dbReference type="EMBL" id="AE004439">
    <property type="protein sequence ID" value="AAK02518.1"/>
    <property type="molecule type" value="Genomic_DNA"/>
</dbReference>
<dbReference type="RefSeq" id="WP_005729714.1">
    <property type="nucleotide sequence ID" value="NC_002663.1"/>
</dbReference>
<dbReference type="SMR" id="Q9CNJ6"/>
<dbReference type="STRING" id="272843.PM0434"/>
<dbReference type="EnsemblBacteria" id="AAK02518">
    <property type="protein sequence ID" value="AAK02518"/>
    <property type="gene ID" value="PM0434"/>
</dbReference>
<dbReference type="GeneID" id="77206082"/>
<dbReference type="KEGG" id="pmu:PM0434"/>
<dbReference type="HOGENOM" id="CLU_033621_2_0_6"/>
<dbReference type="OrthoDB" id="9775069at2"/>
<dbReference type="Proteomes" id="UP000000809">
    <property type="component" value="Chromosome"/>
</dbReference>
<dbReference type="GO" id="GO:0005886">
    <property type="term" value="C:plasma membrane"/>
    <property type="evidence" value="ECO:0007669"/>
    <property type="project" value="UniProtKB-SubCell"/>
</dbReference>
<dbReference type="GO" id="GO:0005315">
    <property type="term" value="F:phosphate transmembrane transporter activity"/>
    <property type="evidence" value="ECO:0007669"/>
    <property type="project" value="InterPro"/>
</dbReference>
<dbReference type="GO" id="GO:0035435">
    <property type="term" value="P:phosphate ion transmembrane transport"/>
    <property type="evidence" value="ECO:0007669"/>
    <property type="project" value="InterPro"/>
</dbReference>
<dbReference type="CDD" id="cd06261">
    <property type="entry name" value="TM_PBP2"/>
    <property type="match status" value="1"/>
</dbReference>
<dbReference type="Gene3D" id="1.10.3720.10">
    <property type="entry name" value="MetI-like"/>
    <property type="match status" value="1"/>
</dbReference>
<dbReference type="InterPro" id="IPR000515">
    <property type="entry name" value="MetI-like"/>
</dbReference>
<dbReference type="InterPro" id="IPR035906">
    <property type="entry name" value="MetI-like_sf"/>
</dbReference>
<dbReference type="InterPro" id="IPR005672">
    <property type="entry name" value="Phosphate_PstA"/>
</dbReference>
<dbReference type="InterPro" id="IPR051408">
    <property type="entry name" value="Phosphate_transprt_permease"/>
</dbReference>
<dbReference type="NCBIfam" id="TIGR00974">
    <property type="entry name" value="3a0107s02c"/>
    <property type="match status" value="1"/>
</dbReference>
<dbReference type="PANTHER" id="PTHR42922">
    <property type="entry name" value="PHOSPHATE TRANSPORT SYSTEM PERMEASE PROTEIN PSTA"/>
    <property type="match status" value="1"/>
</dbReference>
<dbReference type="PANTHER" id="PTHR42922:SF1">
    <property type="entry name" value="PHOSPHATE TRANSPORT SYSTEM PERMEASE PROTEIN PSTA"/>
    <property type="match status" value="1"/>
</dbReference>
<dbReference type="Pfam" id="PF00528">
    <property type="entry name" value="BPD_transp_1"/>
    <property type="match status" value="1"/>
</dbReference>
<dbReference type="SUPFAM" id="SSF161098">
    <property type="entry name" value="MetI-like"/>
    <property type="match status" value="1"/>
</dbReference>
<dbReference type="PROSITE" id="PS50928">
    <property type="entry name" value="ABC_TM1"/>
    <property type="match status" value="1"/>
</dbReference>
<proteinExistence type="inferred from homology"/>
<protein>
    <recommendedName>
        <fullName>Phosphate transport system permease protein PstA</fullName>
    </recommendedName>
</protein>
<name>PSTA_PASMU</name>
<sequence length="280" mass="30805">MSNTHFHCRKLKNKLMLTLSFLAVFFGLFWLCWILFTLITKGIPALSLELFLEKTPGPGEKGGLLNAIIGSTLMITVSTLIGTPIGILAGTYLAEYGRYSQLTKVTRFLNDVLLSAPSIVIGLFIYAIYVSQVKHYSGWAGAFALAIIIIPVVVRTTDNMLNLVPNNLREAAASLGCPQWRVITMICYRSARAGILTGVLLSIARISGETAPLLFTALSNQFTSFDMNGPMANIPIVIYQFAASPFQDWNELAWAGATLITLFVLLLNIFARIFFPQKSK</sequence>
<comment type="function">
    <text evidence="1">Part of a binding-protein-dependent transport system for phosphate; probably responsible for the translocation of the substrate across the membrane.</text>
</comment>
<comment type="subcellular location">
    <subcellularLocation>
        <location evidence="1">Cell inner membrane</location>
        <topology evidence="2">Multi-pass membrane protein</topology>
    </subcellularLocation>
</comment>
<comment type="similarity">
    <text evidence="3">Belongs to the binding-protein-dependent transport system permease family. CysTW subfamily.</text>
</comment>
<keyword id="KW-0997">Cell inner membrane</keyword>
<keyword id="KW-1003">Cell membrane</keyword>
<keyword id="KW-0472">Membrane</keyword>
<keyword id="KW-0592">Phosphate transport</keyword>
<keyword id="KW-1185">Reference proteome</keyword>
<keyword id="KW-0812">Transmembrane</keyword>
<keyword id="KW-1133">Transmembrane helix</keyword>
<keyword id="KW-0813">Transport</keyword>
<gene>
    <name type="primary">pstA</name>
    <name type="ordered locus">PM0434</name>
</gene>
<feature type="chain" id="PRO_0000060195" description="Phosphate transport system permease protein PstA">
    <location>
        <begin position="1"/>
        <end position="280"/>
    </location>
</feature>
<feature type="transmembrane region" description="Helical" evidence="2">
    <location>
        <begin position="19"/>
        <end position="39"/>
    </location>
</feature>
<feature type="transmembrane region" description="Helical" evidence="2">
    <location>
        <begin position="68"/>
        <end position="88"/>
    </location>
</feature>
<feature type="transmembrane region" description="Helical" evidence="2">
    <location>
        <begin position="108"/>
        <end position="128"/>
    </location>
</feature>
<feature type="transmembrane region" description="Helical" evidence="2">
    <location>
        <begin position="133"/>
        <end position="153"/>
    </location>
</feature>
<feature type="transmembrane region" description="Helical" evidence="2">
    <location>
        <begin position="195"/>
        <end position="215"/>
    </location>
</feature>
<feature type="transmembrane region" description="Helical" evidence="2">
    <location>
        <begin position="251"/>
        <end position="271"/>
    </location>
</feature>
<feature type="domain" description="ABC transmembrane type-1" evidence="2">
    <location>
        <begin position="68"/>
        <end position="271"/>
    </location>
</feature>
<evidence type="ECO:0000250" key="1"/>
<evidence type="ECO:0000255" key="2">
    <source>
        <dbReference type="PROSITE-ProRule" id="PRU00441"/>
    </source>
</evidence>
<evidence type="ECO:0000305" key="3"/>
<reference key="1">
    <citation type="journal article" date="2001" name="Proc. Natl. Acad. Sci. U.S.A.">
        <title>Complete genomic sequence of Pasteurella multocida Pm70.</title>
        <authorList>
            <person name="May B.J."/>
            <person name="Zhang Q."/>
            <person name="Li L.L."/>
            <person name="Paustian M.L."/>
            <person name="Whittam T.S."/>
            <person name="Kapur V."/>
        </authorList>
    </citation>
    <scope>NUCLEOTIDE SEQUENCE [LARGE SCALE GENOMIC DNA]</scope>
    <source>
        <strain>Pm70</strain>
    </source>
</reference>
<accession>Q9CNJ6</accession>
<organism>
    <name type="scientific">Pasteurella multocida (strain Pm70)</name>
    <dbReference type="NCBI Taxonomy" id="272843"/>
    <lineage>
        <taxon>Bacteria</taxon>
        <taxon>Pseudomonadati</taxon>
        <taxon>Pseudomonadota</taxon>
        <taxon>Gammaproteobacteria</taxon>
        <taxon>Pasteurellales</taxon>
        <taxon>Pasteurellaceae</taxon>
        <taxon>Pasteurella</taxon>
    </lineage>
</organism>